<reference key="1">
    <citation type="submission" date="2008-05" db="EMBL/GenBank/DDBJ databases">
        <title>Complete sequence of Rhodopseudomonas palustris TIE-1.</title>
        <authorList>
            <consortium name="US DOE Joint Genome Institute"/>
            <person name="Lucas S."/>
            <person name="Copeland A."/>
            <person name="Lapidus A."/>
            <person name="Glavina del Rio T."/>
            <person name="Dalin E."/>
            <person name="Tice H."/>
            <person name="Pitluck S."/>
            <person name="Chain P."/>
            <person name="Malfatti S."/>
            <person name="Shin M."/>
            <person name="Vergez L."/>
            <person name="Lang D."/>
            <person name="Schmutz J."/>
            <person name="Larimer F."/>
            <person name="Land M."/>
            <person name="Hauser L."/>
            <person name="Kyrpides N."/>
            <person name="Mikhailova N."/>
            <person name="Emerson D."/>
            <person name="Newman D.K."/>
            <person name="Roden E."/>
            <person name="Richardson P."/>
        </authorList>
    </citation>
    <scope>NUCLEOTIDE SEQUENCE [LARGE SCALE GENOMIC DNA]</scope>
    <source>
        <strain>TIE-1</strain>
    </source>
</reference>
<comment type="function">
    <text evidence="1">Functions as a PqqA binding protein and presents PqqA to PqqE, in the pyrroloquinoline quinone (PQQ) biosynthetic pathway.</text>
</comment>
<comment type="pathway">
    <text evidence="1">Cofactor biosynthesis; pyrroloquinoline quinone biosynthesis.</text>
</comment>
<comment type="subunit">
    <text evidence="1">Monomer. Interacts with PqqE.</text>
</comment>
<comment type="similarity">
    <text evidence="1">Belongs to the PqqD family.</text>
</comment>
<accession>B3QBT1</accession>
<protein>
    <recommendedName>
        <fullName evidence="1">PqqA binding protein</fullName>
    </recommendedName>
    <alternativeName>
        <fullName evidence="1">Coenzyme PQQ synthesis protein D</fullName>
    </alternativeName>
    <alternativeName>
        <fullName evidence="1">Pyrroloquinoline quinone biosynthesis protein D</fullName>
    </alternativeName>
</protein>
<evidence type="ECO:0000255" key="1">
    <source>
        <dbReference type="HAMAP-Rule" id="MF_00655"/>
    </source>
</evidence>
<feature type="chain" id="PRO_1000131191" description="PqqA binding protein">
    <location>
        <begin position="1"/>
        <end position="102"/>
    </location>
</feature>
<sequence length="102" mass="11408">MAPRRISVSETSRPVLPRHARLKFDETRQRWVILAPERVLAPDEIAVEILQLCDGARDVAAIIDALAVRYTADRAEIGRDVVAMLQDLADKGFLTEARETTP</sequence>
<name>PQQD_RHOPT</name>
<proteinExistence type="inferred from homology"/>
<keyword id="KW-0884">PQQ biosynthesis</keyword>
<dbReference type="EMBL" id="CP001096">
    <property type="protein sequence ID" value="ACF00681.1"/>
    <property type="molecule type" value="Genomic_DNA"/>
</dbReference>
<dbReference type="RefSeq" id="WP_012495482.1">
    <property type="nucleotide sequence ID" value="NC_011004.1"/>
</dbReference>
<dbReference type="SMR" id="B3QBT1"/>
<dbReference type="KEGG" id="rpt:Rpal_2160"/>
<dbReference type="HOGENOM" id="CLU_163864_0_0_5"/>
<dbReference type="OrthoDB" id="7995890at2"/>
<dbReference type="UniPathway" id="UPA00539"/>
<dbReference type="Proteomes" id="UP000001725">
    <property type="component" value="Chromosome"/>
</dbReference>
<dbReference type="GO" id="GO:0048038">
    <property type="term" value="F:quinone binding"/>
    <property type="evidence" value="ECO:0007669"/>
    <property type="project" value="InterPro"/>
</dbReference>
<dbReference type="GO" id="GO:0018189">
    <property type="term" value="P:pyrroloquinoline quinone biosynthetic process"/>
    <property type="evidence" value="ECO:0007669"/>
    <property type="project" value="UniProtKB-UniRule"/>
</dbReference>
<dbReference type="Gene3D" id="1.10.10.1150">
    <property type="entry name" value="Coenzyme PQQ synthesis protein D (PqqD)"/>
    <property type="match status" value="1"/>
</dbReference>
<dbReference type="HAMAP" id="MF_00655">
    <property type="entry name" value="PQQ_syn_PqqD"/>
    <property type="match status" value="1"/>
</dbReference>
<dbReference type="InterPro" id="IPR008792">
    <property type="entry name" value="PQQD"/>
</dbReference>
<dbReference type="InterPro" id="IPR022479">
    <property type="entry name" value="PqqD_bac"/>
</dbReference>
<dbReference type="InterPro" id="IPR041881">
    <property type="entry name" value="PqqD_sf"/>
</dbReference>
<dbReference type="NCBIfam" id="TIGR03859">
    <property type="entry name" value="PQQ_PqqD"/>
    <property type="match status" value="1"/>
</dbReference>
<dbReference type="Pfam" id="PF05402">
    <property type="entry name" value="PqqD"/>
    <property type="match status" value="1"/>
</dbReference>
<gene>
    <name evidence="1" type="primary">pqqD</name>
    <name type="ordered locus">Rpal_2160</name>
</gene>
<organism>
    <name type="scientific">Rhodopseudomonas palustris (strain TIE-1)</name>
    <dbReference type="NCBI Taxonomy" id="395960"/>
    <lineage>
        <taxon>Bacteria</taxon>
        <taxon>Pseudomonadati</taxon>
        <taxon>Pseudomonadota</taxon>
        <taxon>Alphaproteobacteria</taxon>
        <taxon>Hyphomicrobiales</taxon>
        <taxon>Nitrobacteraceae</taxon>
        <taxon>Rhodopseudomonas</taxon>
    </lineage>
</organism>